<organism>
    <name type="scientific">Bos taurus</name>
    <name type="common">Bovine</name>
    <dbReference type="NCBI Taxonomy" id="9913"/>
    <lineage>
        <taxon>Eukaryota</taxon>
        <taxon>Metazoa</taxon>
        <taxon>Chordata</taxon>
        <taxon>Craniata</taxon>
        <taxon>Vertebrata</taxon>
        <taxon>Euteleostomi</taxon>
        <taxon>Mammalia</taxon>
        <taxon>Eutheria</taxon>
        <taxon>Laurasiatheria</taxon>
        <taxon>Artiodactyla</taxon>
        <taxon>Ruminantia</taxon>
        <taxon>Pecora</taxon>
        <taxon>Bovidae</taxon>
        <taxon>Bovinae</taxon>
        <taxon>Bos</taxon>
    </lineage>
</organism>
<accession>A7YWU3</accession>
<comment type="function">
    <text evidence="1">Component of ribonuclease P, a ribonucleoprotein complex that generates mature tRNA molecules by cleaving their 5'-ends. Also a component of the MRP ribonuclease complex, which cleaves pre-rRNA sequences.</text>
</comment>
<comment type="subunit">
    <text evidence="1">Component of nuclear RNase P and RNase MRP ribonucleoproteins. RNase P consists of a catalytic RNA moiety and about 10 protein subunits; POP1, POP4, POP5, POP7, RPP14, RPP21, RPP25, RPP30, RPP38 and RPP40. Within the RNase P complex, POP1, POP7 and RPP25 form the 'finger' subcomplex, POP5, RPP14, RPP40 and homodimeric RPP30 form the 'palm' subcomplex, and RPP21, POP4 and RPP38 form the 'wrist' subcomplex. All subunits of the RNase P complex interact with the catalytic RNA. Several subunits of RNase P are also part of the RNase MRP complex. RNase MRP consists of a catalytic RNA moiety and about 8 protein subunits; POP1, POP7, RPP25, RPP30, RPP38, RPP40 and possibly also POP4 and POP5.</text>
</comment>
<comment type="subcellular location">
    <subcellularLocation>
        <location evidence="2">Nucleus</location>
        <location evidence="2">Nucleolus</location>
    </subcellularLocation>
</comment>
<comment type="sequence caution" evidence="2">
    <conflict type="erroneous initiation">
        <sequence resource="EMBL-CDS" id="AAI34789"/>
    </conflict>
</comment>
<proteinExistence type="evidence at transcript level"/>
<protein>
    <recommendedName>
        <fullName>Ribonuclease P protein subunit p40</fullName>
        <shortName>RNaseP protein p40</shortName>
    </recommendedName>
</protein>
<sequence length="303" mass="34096">MGFGPYYFVKGLPLYELITHEFINTFVKKGSCYALTYNTNIDEDNTVALLPNGKLILSLDKDTYEETGLQGCPSQYSGRKTMRFIVSIDLMDLSSNLDSKKYKRVSWAFKEKKPLKFDFLLAWHQTGAEGSTMMSYFSGYGIQEHQPKIALSTTPDLRCPVLRSGLLGGEPEAACSAHELFDWLGAVFSHADLNNEPYNFVSTYCCPQPSSVVAQASLCSVTGFLLPERICVLLEQLCRYFDEPKLAPWVTLSVQGFADSPVSWRESEHGFQKGGEHLYNFVIFNNRDYWLQMAVGADDDCPP</sequence>
<reference key="1">
    <citation type="submission" date="2007-03" db="EMBL/GenBank/DDBJ databases">
        <authorList>
            <consortium name="NIH - Mammalian Gene Collection (MGC) project"/>
        </authorList>
    </citation>
    <scope>NUCLEOTIDE SEQUENCE [LARGE SCALE MRNA]</scope>
    <source>
        <strain>Hereford</strain>
        <tissue>Fetal pons</tissue>
    </source>
</reference>
<name>RPP40_BOVIN</name>
<evidence type="ECO:0000250" key="1">
    <source>
        <dbReference type="UniProtKB" id="O75818"/>
    </source>
</evidence>
<evidence type="ECO:0000305" key="2"/>
<gene>
    <name type="primary">RPP40</name>
</gene>
<feature type="chain" id="PRO_0000354075" description="Ribonuclease P protein subunit p40">
    <location>
        <begin position="1"/>
        <end position="303"/>
    </location>
</feature>
<keyword id="KW-0539">Nucleus</keyword>
<keyword id="KW-1185">Reference proteome</keyword>
<keyword id="KW-0698">rRNA processing</keyword>
<keyword id="KW-0819">tRNA processing</keyword>
<dbReference type="EMBL" id="BC134788">
    <property type="protein sequence ID" value="AAI34789.1"/>
    <property type="status" value="ALT_INIT"/>
    <property type="molecule type" value="mRNA"/>
</dbReference>
<dbReference type="RefSeq" id="NP_001098872.1">
    <property type="nucleotide sequence ID" value="NM_001105402.2"/>
</dbReference>
<dbReference type="SMR" id="A7YWU3"/>
<dbReference type="FunCoup" id="A7YWU3">
    <property type="interactions" value="56"/>
</dbReference>
<dbReference type="STRING" id="9913.ENSBTAP00000004325"/>
<dbReference type="PaxDb" id="9913-ENSBTAP00000004325"/>
<dbReference type="GeneID" id="531274"/>
<dbReference type="KEGG" id="bta:531274"/>
<dbReference type="CTD" id="10799"/>
<dbReference type="eggNOG" id="ENOG502QSAV">
    <property type="taxonomic scope" value="Eukaryota"/>
</dbReference>
<dbReference type="InParanoid" id="A7YWU3"/>
<dbReference type="OrthoDB" id="63112at2759"/>
<dbReference type="Proteomes" id="UP000009136">
    <property type="component" value="Unplaced"/>
</dbReference>
<dbReference type="GO" id="GO:0030681">
    <property type="term" value="C:multimeric ribonuclease P complex"/>
    <property type="evidence" value="ECO:0000250"/>
    <property type="project" value="UniProtKB"/>
</dbReference>
<dbReference type="GO" id="GO:0005730">
    <property type="term" value="C:nucleolus"/>
    <property type="evidence" value="ECO:0007669"/>
    <property type="project" value="UniProtKB-SubCell"/>
</dbReference>
<dbReference type="GO" id="GO:0000172">
    <property type="term" value="C:ribonuclease MRP complex"/>
    <property type="evidence" value="ECO:0000318"/>
    <property type="project" value="GO_Central"/>
</dbReference>
<dbReference type="GO" id="GO:0004526">
    <property type="term" value="F:ribonuclease P activity"/>
    <property type="evidence" value="ECO:0007669"/>
    <property type="project" value="UniProtKB-EC"/>
</dbReference>
<dbReference type="GO" id="GO:0033204">
    <property type="term" value="F:ribonuclease P RNA binding"/>
    <property type="evidence" value="ECO:0000250"/>
    <property type="project" value="UniProtKB"/>
</dbReference>
<dbReference type="GO" id="GO:0000447">
    <property type="term" value="P:endonucleolytic cleavage in ITS1 to separate SSU-rRNA from 5.8S rRNA and LSU-rRNA from tricistronic rRNA transcript (SSU-rRNA, 5.8S rRNA, LSU-rRNA)"/>
    <property type="evidence" value="ECO:0000318"/>
    <property type="project" value="GO_Central"/>
</dbReference>
<dbReference type="GO" id="GO:0001682">
    <property type="term" value="P:tRNA 5'-leader removal"/>
    <property type="evidence" value="ECO:0000250"/>
    <property type="project" value="UniProtKB"/>
</dbReference>
<dbReference type="InterPro" id="IPR013893">
    <property type="entry name" value="RNase_P_Rpp40"/>
</dbReference>
<dbReference type="PANTHER" id="PTHR15396">
    <property type="entry name" value="RIBONUCLEASE P PROTEIN SUBUNIT P40"/>
    <property type="match status" value="1"/>
</dbReference>
<dbReference type="PANTHER" id="PTHR15396:SF1">
    <property type="entry name" value="RIBONUCLEASE P PROTEIN SUBUNIT P40"/>
    <property type="match status" value="1"/>
</dbReference>
<dbReference type="Pfam" id="PF08584">
    <property type="entry name" value="Ribonuc_P_40"/>
    <property type="match status" value="1"/>
</dbReference>